<proteinExistence type="inferred from homology"/>
<sequence length="244" mass="26286">MTATVEIRRAADRAVTTTSWLKSRHSFSFGDHYDPDNTHHGLLLVNNDDQMEPASGFDPHPHRDMEIVTWVLRGALRHQDSAGNSGVIYPGLAQRMSAGTGILHSEMNDSATEPVHFVQMWVIPDATGITASYQQQEIDDELLRAGLVTIASGIPGQDAALTLHNSSASLHGARLRPGATVSLPCAPFLHLFVAYGRLTLEGGGELADGDAVRFTDADARGLTANEPSEVLIWEMHAKLGDSAT</sequence>
<dbReference type="EC" id="1.13.11.24"/>
<dbReference type="EMBL" id="AE000516">
    <property type="protein sequence ID" value="AAK44410.1"/>
    <property type="molecule type" value="Genomic_DNA"/>
</dbReference>
<dbReference type="PIR" id="H70905">
    <property type="entry name" value="H70905"/>
</dbReference>
<dbReference type="RefSeq" id="WP_003401107.1">
    <property type="nucleotide sequence ID" value="NZ_KK341227.1"/>
</dbReference>
<dbReference type="SMR" id="P9WI84"/>
<dbReference type="KEGG" id="mtc:MT0190"/>
<dbReference type="PATRIC" id="fig|83331.31.peg.207"/>
<dbReference type="HOGENOM" id="CLU_064194_2_0_11"/>
<dbReference type="UniPathway" id="UPA00724"/>
<dbReference type="Proteomes" id="UP000001020">
    <property type="component" value="Chromosome"/>
</dbReference>
<dbReference type="GO" id="GO:0046872">
    <property type="term" value="F:metal ion binding"/>
    <property type="evidence" value="ECO:0007669"/>
    <property type="project" value="UniProtKB-KW"/>
</dbReference>
<dbReference type="GO" id="GO:0008127">
    <property type="term" value="F:quercetin 2,3-dioxygenase activity"/>
    <property type="evidence" value="ECO:0007669"/>
    <property type="project" value="UniProtKB-EC"/>
</dbReference>
<dbReference type="CDD" id="cd02910">
    <property type="entry name" value="cupin_Yhhw_N"/>
    <property type="match status" value="1"/>
</dbReference>
<dbReference type="Gene3D" id="2.60.120.10">
    <property type="entry name" value="Jelly Rolls"/>
    <property type="match status" value="2"/>
</dbReference>
<dbReference type="InterPro" id="IPR012093">
    <property type="entry name" value="Pirin"/>
</dbReference>
<dbReference type="InterPro" id="IPR003829">
    <property type="entry name" value="Pirin_N_dom"/>
</dbReference>
<dbReference type="InterPro" id="IPR041602">
    <property type="entry name" value="Quercetinase_C"/>
</dbReference>
<dbReference type="InterPro" id="IPR014710">
    <property type="entry name" value="RmlC-like_jellyroll"/>
</dbReference>
<dbReference type="InterPro" id="IPR011051">
    <property type="entry name" value="RmlC_Cupin_sf"/>
</dbReference>
<dbReference type="PANTHER" id="PTHR43212">
    <property type="entry name" value="QUERCETIN 2,3-DIOXYGENASE"/>
    <property type="match status" value="1"/>
</dbReference>
<dbReference type="PANTHER" id="PTHR43212:SF3">
    <property type="entry name" value="QUERCETIN 2,3-DIOXYGENASE"/>
    <property type="match status" value="1"/>
</dbReference>
<dbReference type="Pfam" id="PF02678">
    <property type="entry name" value="Pirin"/>
    <property type="match status" value="1"/>
</dbReference>
<dbReference type="Pfam" id="PF17954">
    <property type="entry name" value="Pirin_C_2"/>
    <property type="match status" value="1"/>
</dbReference>
<dbReference type="PIRSF" id="PIRSF006232">
    <property type="entry name" value="Pirin"/>
    <property type="match status" value="1"/>
</dbReference>
<dbReference type="SUPFAM" id="SSF51182">
    <property type="entry name" value="RmlC-like cupins"/>
    <property type="match status" value="1"/>
</dbReference>
<accession>P9WI84</accession>
<accession>L0T5S0</accession>
<accession>O07425</accession>
<accession>P65724</accession>
<evidence type="ECO:0000250" key="1"/>
<evidence type="ECO:0000305" key="2"/>
<organism>
    <name type="scientific">Mycobacterium tuberculosis (strain CDC 1551 / Oshkosh)</name>
    <dbReference type="NCBI Taxonomy" id="83331"/>
    <lineage>
        <taxon>Bacteria</taxon>
        <taxon>Bacillati</taxon>
        <taxon>Actinomycetota</taxon>
        <taxon>Actinomycetes</taxon>
        <taxon>Mycobacteriales</taxon>
        <taxon>Mycobacteriaceae</taxon>
        <taxon>Mycobacterium</taxon>
        <taxon>Mycobacterium tuberculosis complex</taxon>
    </lineage>
</organism>
<name>Y181_MYCTO</name>
<feature type="chain" id="PRO_0000428051" description="Putative quercetin 2,3-dioxygenase MT0190">
    <location>
        <begin position="1"/>
        <end position="244"/>
    </location>
</feature>
<feature type="binding site" evidence="1">
    <location>
        <position position="60"/>
    </location>
    <ligand>
        <name>a divalent metal cation</name>
        <dbReference type="ChEBI" id="CHEBI:60240"/>
    </ligand>
</feature>
<feature type="binding site" evidence="1">
    <location>
        <position position="62"/>
    </location>
    <ligand>
        <name>a divalent metal cation</name>
        <dbReference type="ChEBI" id="CHEBI:60240"/>
    </ligand>
</feature>
<feature type="binding site" evidence="1">
    <location>
        <position position="104"/>
    </location>
    <ligand>
        <name>a divalent metal cation</name>
        <dbReference type="ChEBI" id="CHEBI:60240"/>
    </ligand>
</feature>
<feature type="binding site" evidence="1">
    <location>
        <position position="106"/>
    </location>
    <ligand>
        <name>a divalent metal cation</name>
        <dbReference type="ChEBI" id="CHEBI:60240"/>
    </ligand>
</feature>
<keyword id="KW-0223">Dioxygenase</keyword>
<keyword id="KW-0479">Metal-binding</keyword>
<keyword id="KW-0560">Oxidoreductase</keyword>
<keyword id="KW-1185">Reference proteome</keyword>
<comment type="function">
    <text evidence="1">Putative quercetin 2,3-dioxygenase.</text>
</comment>
<comment type="catalytic activity">
    <reaction>
        <text>quercetin + O2 = 2-(3,4-dihydroxybenzoyloxy)-4,6-dihydroxybenzoate + CO</text>
        <dbReference type="Rhea" id="RHEA:15381"/>
        <dbReference type="ChEBI" id="CHEBI:15379"/>
        <dbReference type="ChEBI" id="CHEBI:17245"/>
        <dbReference type="ChEBI" id="CHEBI:57628"/>
        <dbReference type="ChEBI" id="CHEBI:57694"/>
        <dbReference type="EC" id="1.13.11.24"/>
    </reaction>
</comment>
<comment type="cofactor">
    <cofactor evidence="1">
        <name>a divalent metal cation</name>
        <dbReference type="ChEBI" id="CHEBI:60240"/>
    </cofactor>
    <text evidence="1">Binds 1 divalent metal cation.</text>
</comment>
<comment type="pathway">
    <text>Flavonoid metabolism; quercetin degradation.</text>
</comment>
<comment type="similarity">
    <text evidence="2">Belongs to the pirin family.</text>
</comment>
<protein>
    <recommendedName>
        <fullName>Putative quercetin 2,3-dioxygenase MT0190</fullName>
        <shortName>Putative quercetinase</shortName>
        <ecNumber>1.13.11.24</ecNumber>
    </recommendedName>
    <alternativeName>
        <fullName>Pirin-like protein MT0190</fullName>
    </alternativeName>
</protein>
<gene>
    <name type="ordered locus">MT0190</name>
</gene>
<reference key="1">
    <citation type="journal article" date="2002" name="J. Bacteriol.">
        <title>Whole-genome comparison of Mycobacterium tuberculosis clinical and laboratory strains.</title>
        <authorList>
            <person name="Fleischmann R.D."/>
            <person name="Alland D."/>
            <person name="Eisen J.A."/>
            <person name="Carpenter L."/>
            <person name="White O."/>
            <person name="Peterson J.D."/>
            <person name="DeBoy R.T."/>
            <person name="Dodson R.J."/>
            <person name="Gwinn M.L."/>
            <person name="Haft D.H."/>
            <person name="Hickey E.K."/>
            <person name="Kolonay J.F."/>
            <person name="Nelson W.C."/>
            <person name="Umayam L.A."/>
            <person name="Ermolaeva M.D."/>
            <person name="Salzberg S.L."/>
            <person name="Delcher A."/>
            <person name="Utterback T.R."/>
            <person name="Weidman J.F."/>
            <person name="Khouri H.M."/>
            <person name="Gill J."/>
            <person name="Mikula A."/>
            <person name="Bishai W."/>
            <person name="Jacobs W.R. Jr."/>
            <person name="Venter J.C."/>
            <person name="Fraser C.M."/>
        </authorList>
    </citation>
    <scope>NUCLEOTIDE SEQUENCE [LARGE SCALE GENOMIC DNA]</scope>
    <source>
        <strain>CDC 1551 / Oshkosh</strain>
    </source>
</reference>